<reference key="1">
    <citation type="journal article" date="2005" name="Nucleic Acids Res.">
        <title>The genome sequence of Xanthomonas oryzae pathovar oryzae KACC10331, the bacterial blight pathogen of rice.</title>
        <authorList>
            <person name="Lee B.-M."/>
            <person name="Park Y.-J."/>
            <person name="Park D.-S."/>
            <person name="Kang H.-W."/>
            <person name="Kim J.-G."/>
            <person name="Song E.-S."/>
            <person name="Park I.-C."/>
            <person name="Yoon U.-H."/>
            <person name="Hahn J.-H."/>
            <person name="Koo B.-S."/>
            <person name="Lee G.-B."/>
            <person name="Kim H."/>
            <person name="Park H.-S."/>
            <person name="Yoon K.-O."/>
            <person name="Kim J.-H."/>
            <person name="Jung C.-H."/>
            <person name="Koh N.-H."/>
            <person name="Seo J.-S."/>
            <person name="Go S.-J."/>
        </authorList>
    </citation>
    <scope>NUCLEOTIDE SEQUENCE [LARGE SCALE GENOMIC DNA]</scope>
    <source>
        <strain>KACC10331 / KXO85</strain>
    </source>
</reference>
<protein>
    <recommendedName>
        <fullName evidence="1">NADH-quinone oxidoreductase subunit I</fullName>
        <ecNumber evidence="1">7.1.1.-</ecNumber>
    </recommendedName>
    <alternativeName>
        <fullName evidence="1">NADH dehydrogenase I subunit I</fullName>
    </alternativeName>
    <alternativeName>
        <fullName evidence="1">NDH-1 subunit I</fullName>
    </alternativeName>
</protein>
<name>NUOI_XANOR</name>
<feature type="chain" id="PRO_0000250954" description="NADH-quinone oxidoreductase subunit I">
    <location>
        <begin position="1"/>
        <end position="163"/>
    </location>
</feature>
<feature type="domain" description="4Fe-4S ferredoxin-type 1" evidence="1">
    <location>
        <begin position="54"/>
        <end position="84"/>
    </location>
</feature>
<feature type="domain" description="4Fe-4S ferredoxin-type 2" evidence="1">
    <location>
        <begin position="94"/>
        <end position="123"/>
    </location>
</feature>
<feature type="binding site" evidence="1">
    <location>
        <position position="64"/>
    </location>
    <ligand>
        <name>[4Fe-4S] cluster</name>
        <dbReference type="ChEBI" id="CHEBI:49883"/>
        <label>1</label>
    </ligand>
</feature>
<feature type="binding site" evidence="1">
    <location>
        <position position="67"/>
    </location>
    <ligand>
        <name>[4Fe-4S] cluster</name>
        <dbReference type="ChEBI" id="CHEBI:49883"/>
        <label>1</label>
    </ligand>
</feature>
<feature type="binding site" evidence="1">
    <location>
        <position position="70"/>
    </location>
    <ligand>
        <name>[4Fe-4S] cluster</name>
        <dbReference type="ChEBI" id="CHEBI:49883"/>
        <label>1</label>
    </ligand>
</feature>
<feature type="binding site" evidence="1">
    <location>
        <position position="74"/>
    </location>
    <ligand>
        <name>[4Fe-4S] cluster</name>
        <dbReference type="ChEBI" id="CHEBI:49883"/>
        <label>2</label>
    </ligand>
</feature>
<feature type="binding site" evidence="1">
    <location>
        <position position="103"/>
    </location>
    <ligand>
        <name>[4Fe-4S] cluster</name>
        <dbReference type="ChEBI" id="CHEBI:49883"/>
        <label>2</label>
    </ligand>
</feature>
<feature type="binding site" evidence="1">
    <location>
        <position position="106"/>
    </location>
    <ligand>
        <name>[4Fe-4S] cluster</name>
        <dbReference type="ChEBI" id="CHEBI:49883"/>
        <label>2</label>
    </ligand>
</feature>
<feature type="binding site" evidence="1">
    <location>
        <position position="109"/>
    </location>
    <ligand>
        <name>[4Fe-4S] cluster</name>
        <dbReference type="ChEBI" id="CHEBI:49883"/>
        <label>2</label>
    </ligand>
</feature>
<feature type="binding site" evidence="1">
    <location>
        <position position="113"/>
    </location>
    <ligand>
        <name>[4Fe-4S] cluster</name>
        <dbReference type="ChEBI" id="CHEBI:49883"/>
        <label>1</label>
    </ligand>
</feature>
<evidence type="ECO:0000255" key="1">
    <source>
        <dbReference type="HAMAP-Rule" id="MF_01351"/>
    </source>
</evidence>
<gene>
    <name evidence="1" type="primary">nuoI</name>
    <name type="ordered locus">XOO3227</name>
</gene>
<comment type="function">
    <text evidence="1">NDH-1 shuttles electrons from NADH, via FMN and iron-sulfur (Fe-S) centers, to quinones in the respiratory chain. The immediate electron acceptor for the enzyme in this species is believed to be ubiquinone. Couples the redox reaction to proton translocation (for every two electrons transferred, four hydrogen ions are translocated across the cytoplasmic membrane), and thus conserves the redox energy in a proton gradient.</text>
</comment>
<comment type="catalytic activity">
    <reaction evidence="1">
        <text>a quinone + NADH + 5 H(+)(in) = a quinol + NAD(+) + 4 H(+)(out)</text>
        <dbReference type="Rhea" id="RHEA:57888"/>
        <dbReference type="ChEBI" id="CHEBI:15378"/>
        <dbReference type="ChEBI" id="CHEBI:24646"/>
        <dbReference type="ChEBI" id="CHEBI:57540"/>
        <dbReference type="ChEBI" id="CHEBI:57945"/>
        <dbReference type="ChEBI" id="CHEBI:132124"/>
    </reaction>
</comment>
<comment type="cofactor">
    <cofactor evidence="1">
        <name>[4Fe-4S] cluster</name>
        <dbReference type="ChEBI" id="CHEBI:49883"/>
    </cofactor>
    <text evidence="1">Binds 2 [4Fe-4S] clusters per subunit.</text>
</comment>
<comment type="subunit">
    <text evidence="1">NDH-1 is composed of 14 different subunits. Subunits NuoA, H, J, K, L, M, N constitute the membrane sector of the complex.</text>
</comment>
<comment type="subcellular location">
    <subcellularLocation>
        <location evidence="1">Cell inner membrane</location>
        <topology evidence="1">Peripheral membrane protein</topology>
    </subcellularLocation>
</comment>
<comment type="similarity">
    <text evidence="1">Belongs to the complex I 23 kDa subunit family.</text>
</comment>
<sequence>MMNKITHYFKSLLLLELLGGLWLTLKYTFKPKYTVLYPMEKFPQSPRFRGLHALRRYPNGEERCIACKLCEAVCPALAITIDSAKREDGTRRTTRYDIDLFKCIFCGFCEESCPVDSIVETHILEYHFEKRGENIINKPQLLAIGDRLETEIAERRAADAAFR</sequence>
<dbReference type="EC" id="7.1.1.-" evidence="1"/>
<dbReference type="EMBL" id="AE013598">
    <property type="protein sequence ID" value="AAW76481.1"/>
    <property type="molecule type" value="Genomic_DNA"/>
</dbReference>
<dbReference type="SMR" id="Q5GXU0"/>
<dbReference type="STRING" id="291331.XOO3227"/>
<dbReference type="KEGG" id="xoo:XOO3227"/>
<dbReference type="HOGENOM" id="CLU_067218_5_1_6"/>
<dbReference type="Proteomes" id="UP000006735">
    <property type="component" value="Chromosome"/>
</dbReference>
<dbReference type="GO" id="GO:0005886">
    <property type="term" value="C:plasma membrane"/>
    <property type="evidence" value="ECO:0007669"/>
    <property type="project" value="UniProtKB-SubCell"/>
</dbReference>
<dbReference type="GO" id="GO:0051539">
    <property type="term" value="F:4 iron, 4 sulfur cluster binding"/>
    <property type="evidence" value="ECO:0007669"/>
    <property type="project" value="UniProtKB-KW"/>
</dbReference>
<dbReference type="GO" id="GO:0005506">
    <property type="term" value="F:iron ion binding"/>
    <property type="evidence" value="ECO:0007669"/>
    <property type="project" value="UniProtKB-UniRule"/>
</dbReference>
<dbReference type="GO" id="GO:0050136">
    <property type="term" value="F:NADH:ubiquinone reductase (non-electrogenic) activity"/>
    <property type="evidence" value="ECO:0007669"/>
    <property type="project" value="UniProtKB-UniRule"/>
</dbReference>
<dbReference type="GO" id="GO:0048038">
    <property type="term" value="F:quinone binding"/>
    <property type="evidence" value="ECO:0007669"/>
    <property type="project" value="UniProtKB-KW"/>
</dbReference>
<dbReference type="GO" id="GO:0009060">
    <property type="term" value="P:aerobic respiration"/>
    <property type="evidence" value="ECO:0007669"/>
    <property type="project" value="TreeGrafter"/>
</dbReference>
<dbReference type="FunFam" id="3.30.70.3270:FF:000003">
    <property type="entry name" value="NADH-quinone oxidoreductase subunit I"/>
    <property type="match status" value="1"/>
</dbReference>
<dbReference type="Gene3D" id="3.30.70.3270">
    <property type="match status" value="1"/>
</dbReference>
<dbReference type="HAMAP" id="MF_01351">
    <property type="entry name" value="NDH1_NuoI"/>
    <property type="match status" value="1"/>
</dbReference>
<dbReference type="InterPro" id="IPR017896">
    <property type="entry name" value="4Fe4S_Fe-S-bd"/>
</dbReference>
<dbReference type="InterPro" id="IPR017900">
    <property type="entry name" value="4Fe4S_Fe_S_CS"/>
</dbReference>
<dbReference type="InterPro" id="IPR010226">
    <property type="entry name" value="NADH_quinone_OxRdtase_chainI"/>
</dbReference>
<dbReference type="NCBIfam" id="TIGR01971">
    <property type="entry name" value="NuoI"/>
    <property type="match status" value="1"/>
</dbReference>
<dbReference type="NCBIfam" id="NF004538">
    <property type="entry name" value="PRK05888.1-4"/>
    <property type="match status" value="1"/>
</dbReference>
<dbReference type="NCBIfam" id="NF004539">
    <property type="entry name" value="PRK05888.1-5"/>
    <property type="match status" value="1"/>
</dbReference>
<dbReference type="PANTHER" id="PTHR10849:SF20">
    <property type="entry name" value="NADH DEHYDROGENASE [UBIQUINONE] IRON-SULFUR PROTEIN 8, MITOCHONDRIAL"/>
    <property type="match status" value="1"/>
</dbReference>
<dbReference type="PANTHER" id="PTHR10849">
    <property type="entry name" value="NADH DEHYDROGENASE UBIQUINONE IRON-SULFUR PROTEIN 8, MITOCHONDRIAL"/>
    <property type="match status" value="1"/>
</dbReference>
<dbReference type="Pfam" id="PF12838">
    <property type="entry name" value="Fer4_7"/>
    <property type="match status" value="1"/>
</dbReference>
<dbReference type="SUPFAM" id="SSF54862">
    <property type="entry name" value="4Fe-4S ferredoxins"/>
    <property type="match status" value="1"/>
</dbReference>
<dbReference type="PROSITE" id="PS00198">
    <property type="entry name" value="4FE4S_FER_1"/>
    <property type="match status" value="2"/>
</dbReference>
<dbReference type="PROSITE" id="PS51379">
    <property type="entry name" value="4FE4S_FER_2"/>
    <property type="match status" value="2"/>
</dbReference>
<proteinExistence type="inferred from homology"/>
<accession>Q5GXU0</accession>
<organism>
    <name type="scientific">Xanthomonas oryzae pv. oryzae (strain KACC10331 / KXO85)</name>
    <dbReference type="NCBI Taxonomy" id="291331"/>
    <lineage>
        <taxon>Bacteria</taxon>
        <taxon>Pseudomonadati</taxon>
        <taxon>Pseudomonadota</taxon>
        <taxon>Gammaproteobacteria</taxon>
        <taxon>Lysobacterales</taxon>
        <taxon>Lysobacteraceae</taxon>
        <taxon>Xanthomonas</taxon>
    </lineage>
</organism>
<keyword id="KW-0004">4Fe-4S</keyword>
<keyword id="KW-0997">Cell inner membrane</keyword>
<keyword id="KW-1003">Cell membrane</keyword>
<keyword id="KW-0408">Iron</keyword>
<keyword id="KW-0411">Iron-sulfur</keyword>
<keyword id="KW-0472">Membrane</keyword>
<keyword id="KW-0479">Metal-binding</keyword>
<keyword id="KW-0520">NAD</keyword>
<keyword id="KW-0874">Quinone</keyword>
<keyword id="KW-1185">Reference proteome</keyword>
<keyword id="KW-0677">Repeat</keyword>
<keyword id="KW-1278">Translocase</keyword>
<keyword id="KW-0830">Ubiquinone</keyword>